<sequence length="120" mass="12397">PYEKIGAELVKEVAKKTDDVAGDGTTTATVLAQALVKEGLRNVAAGANPLSLKRGIEKAVEKVTETLLKSAKEVETKDQIAATAAISAGDQSIGDLIAEAMDKVGNEGVITVEESNTFGL</sequence>
<organism>
    <name type="scientific">Mycobacterium scrofulaceum</name>
    <dbReference type="NCBI Taxonomy" id="1783"/>
    <lineage>
        <taxon>Bacteria</taxon>
        <taxon>Bacillati</taxon>
        <taxon>Actinomycetota</taxon>
        <taxon>Actinomycetes</taxon>
        <taxon>Mycobacteriales</taxon>
        <taxon>Mycobacteriaceae</taxon>
        <taxon>Mycobacterium</taxon>
    </lineage>
</organism>
<evidence type="ECO:0000255" key="1">
    <source>
        <dbReference type="HAMAP-Rule" id="MF_00600"/>
    </source>
</evidence>
<evidence type="ECO:0000305" key="2"/>
<keyword id="KW-0067">ATP-binding</keyword>
<keyword id="KW-0143">Chaperone</keyword>
<keyword id="KW-0963">Cytoplasm</keyword>
<keyword id="KW-0413">Isomerase</keyword>
<keyword id="KW-0547">Nucleotide-binding</keyword>
<keyword id="KW-0346">Stress response</keyword>
<dbReference type="EC" id="5.6.1.7" evidence="1"/>
<dbReference type="EMBL" id="U17955">
    <property type="protein sequence ID" value="AAB39074.1"/>
    <property type="molecule type" value="Genomic_DNA"/>
</dbReference>
<dbReference type="EMBL" id="S76639">
    <property type="protein sequence ID" value="AAP31976.1"/>
    <property type="molecule type" value="Genomic_DNA"/>
</dbReference>
<dbReference type="SMR" id="Q50382"/>
<dbReference type="STRING" id="1783.BST44_11765"/>
<dbReference type="GO" id="GO:0005737">
    <property type="term" value="C:cytoplasm"/>
    <property type="evidence" value="ECO:0007669"/>
    <property type="project" value="UniProtKB-SubCell"/>
</dbReference>
<dbReference type="GO" id="GO:0005524">
    <property type="term" value="F:ATP binding"/>
    <property type="evidence" value="ECO:0007669"/>
    <property type="project" value="UniProtKB-KW"/>
</dbReference>
<dbReference type="GO" id="GO:0140662">
    <property type="term" value="F:ATP-dependent protein folding chaperone"/>
    <property type="evidence" value="ECO:0007669"/>
    <property type="project" value="InterPro"/>
</dbReference>
<dbReference type="GO" id="GO:0016853">
    <property type="term" value="F:isomerase activity"/>
    <property type="evidence" value="ECO:0007669"/>
    <property type="project" value="UniProtKB-KW"/>
</dbReference>
<dbReference type="GO" id="GO:0042026">
    <property type="term" value="P:protein refolding"/>
    <property type="evidence" value="ECO:0007669"/>
    <property type="project" value="InterPro"/>
</dbReference>
<dbReference type="Gene3D" id="1.10.560.10">
    <property type="entry name" value="GroEL-like equatorial domain"/>
    <property type="match status" value="1"/>
</dbReference>
<dbReference type="Gene3D" id="3.30.260.10">
    <property type="entry name" value="TCP-1-like chaperonin intermediate domain"/>
    <property type="match status" value="1"/>
</dbReference>
<dbReference type="InterPro" id="IPR001844">
    <property type="entry name" value="Cpn60/GroEL"/>
</dbReference>
<dbReference type="InterPro" id="IPR002423">
    <property type="entry name" value="Cpn60/GroEL/TCP-1"/>
</dbReference>
<dbReference type="InterPro" id="IPR027413">
    <property type="entry name" value="GROEL-like_equatorial_sf"/>
</dbReference>
<dbReference type="InterPro" id="IPR027410">
    <property type="entry name" value="TCP-1-like_intermed_sf"/>
</dbReference>
<dbReference type="PANTHER" id="PTHR45633">
    <property type="entry name" value="60 KDA HEAT SHOCK PROTEIN, MITOCHONDRIAL"/>
    <property type="match status" value="1"/>
</dbReference>
<dbReference type="Pfam" id="PF00118">
    <property type="entry name" value="Cpn60_TCP1"/>
    <property type="match status" value="1"/>
</dbReference>
<dbReference type="SUPFAM" id="SSF48592">
    <property type="entry name" value="GroEL equatorial domain-like"/>
    <property type="match status" value="1"/>
</dbReference>
<protein>
    <recommendedName>
        <fullName evidence="1">Chaperonin GroEL</fullName>
        <ecNumber evidence="1">5.6.1.7</ecNumber>
    </recommendedName>
    <alternativeName>
        <fullName evidence="1">60 kDa chaperonin</fullName>
    </alternativeName>
    <alternativeName>
        <fullName>65 kDa heat shock protein</fullName>
    </alternativeName>
    <alternativeName>
        <fullName evidence="1">Chaperonin-60</fullName>
        <shortName evidence="1">Cpn60</shortName>
    </alternativeName>
</protein>
<feature type="chain" id="PRO_0000063448" description="Chaperonin GroEL">
    <location>
        <begin position="1" status="less than"/>
        <end position="120" status="greater than"/>
    </location>
</feature>
<feature type="binding site" evidence="1">
    <location>
        <begin position="23"/>
        <end position="27"/>
    </location>
    <ligand>
        <name>ATP</name>
        <dbReference type="ChEBI" id="CHEBI:30616"/>
    </ligand>
</feature>
<feature type="sequence conflict" description="In Ref. 2; AAP31976." evidence="2" ref="2">
    <original>S</original>
    <variation>G</variation>
    <location>
        <position position="51"/>
    </location>
</feature>
<feature type="sequence conflict" description="In Ref. 2; AAP31976." evidence="2" ref="2">
    <original>S</original>
    <variation>G</variation>
    <location>
        <position position="70"/>
    </location>
</feature>
<feature type="sequence conflict" description="In Ref. 2; AAP31976." evidence="2" ref="2">
    <original>D</original>
    <variation>E</variation>
    <location>
        <position position="78"/>
    </location>
</feature>
<feature type="non-terminal residue">
    <location>
        <position position="1"/>
    </location>
</feature>
<feature type="non-terminal residue">
    <location>
        <position position="120"/>
    </location>
</feature>
<accession>Q50382</accession>
<accession>Q53490</accession>
<name>CH60_MYCSC</name>
<reference key="1">
    <citation type="journal article" date="1995" name="Arch. Pathol. Lab. Med.">
        <title>Rapid Mycobacterium species assignment and unambiguous identification of mutations associated with antimicrobial resistance in Mycobacterium tuberculosis by automated DNA sequencing.</title>
        <authorList>
            <person name="Kapur V."/>
            <person name="Li L.L."/>
            <person name="Hamrick M.R."/>
            <person name="Plikaytis B.B."/>
            <person name="Shinnick T.M."/>
            <person name="Telenti A."/>
            <person name="Jacobs W.R. Jr."/>
            <person name="Banerjee A."/>
            <person name="Cole S."/>
            <person name="Yuen K.Y."/>
            <person name="Clarridge J.E."/>
            <person name="Kreiswirth B.N."/>
            <person name="Musser J.M."/>
        </authorList>
    </citation>
    <scope>NUCLEOTIDE SEQUENCE [GENOMIC DNA]</scope>
    <source>
        <strain>1374</strain>
    </source>
</reference>
<reference key="2">
    <citation type="journal article" date="1995" name="Rinsho Byori">
        <title>Detection and identification of mycobacteria by PCR-RFLP method.</title>
        <authorList>
            <person name="Hidaka E."/>
            <person name="Ueno I."/>
            <person name="Kawakami Y."/>
            <person name="Furuwatari C."/>
            <person name="Furihata K."/>
            <person name="Katsuyama T."/>
        </authorList>
    </citation>
    <scope>NUCLEOTIDE SEQUENCE [GENOMIC DNA] OF 2-115</scope>
</reference>
<comment type="function">
    <text evidence="1">Together with its co-chaperonin GroES, plays an essential role in assisting protein folding. The GroEL-GroES system forms a nano-cage that allows encapsulation of the non-native substrate proteins and provides a physical environment optimized to promote and accelerate protein folding.</text>
</comment>
<comment type="catalytic activity">
    <reaction evidence="1">
        <text>ATP + H2O + a folded polypeptide = ADP + phosphate + an unfolded polypeptide.</text>
        <dbReference type="EC" id="5.6.1.7"/>
    </reaction>
</comment>
<comment type="subunit">
    <text evidence="1">Forms a cylinder of 14 subunits composed of two heptameric rings stacked back-to-back. Interacts with the co-chaperonin GroES.</text>
</comment>
<comment type="subcellular location">
    <subcellularLocation>
        <location evidence="1">Cytoplasm</location>
    </subcellularLocation>
</comment>
<comment type="similarity">
    <text evidence="1 2">Belongs to the chaperonin (HSP60) family.</text>
</comment>
<gene>
    <name evidence="1" type="primary">groEL</name>
    <name evidence="1" type="synonym">groL</name>
    <name type="synonym">mopA</name>
</gene>
<proteinExistence type="inferred from homology"/>